<comment type="function">
    <text evidence="1">Located at the top of the head of the 30S subunit, it contacts several helices of the 16S rRNA. In the 70S ribosome it contacts the 23S rRNA (bridge B1a) and protein L5 of the 50S subunit (bridge B1b), connecting the 2 subunits; these bridges are implicated in subunit movement. Contacts the tRNAs in the A and P-sites.</text>
</comment>
<comment type="subunit">
    <text evidence="1">Part of the 30S ribosomal subunit. Forms a loose heterodimer with protein S19. Forms two bridges to the 50S subunit in the 70S ribosome.</text>
</comment>
<comment type="similarity">
    <text evidence="1">Belongs to the universal ribosomal protein uS13 family.</text>
</comment>
<reference key="1">
    <citation type="journal article" date="2009" name="J. Bacteriol.">
        <title>Complete genome sequence of Erythrobacter litoralis HTCC2594.</title>
        <authorList>
            <person name="Oh H.M."/>
            <person name="Giovannoni S.J."/>
            <person name="Ferriera S."/>
            <person name="Johnson J."/>
            <person name="Cho J.C."/>
        </authorList>
    </citation>
    <scope>NUCLEOTIDE SEQUENCE [LARGE SCALE GENOMIC DNA]</scope>
    <source>
        <strain>HTCC2594</strain>
    </source>
</reference>
<dbReference type="EMBL" id="CP000157">
    <property type="protein sequence ID" value="ABC63706.1"/>
    <property type="molecule type" value="Genomic_DNA"/>
</dbReference>
<dbReference type="RefSeq" id="WP_011414538.1">
    <property type="nucleotide sequence ID" value="NC_007722.1"/>
</dbReference>
<dbReference type="SMR" id="Q2N9D5"/>
<dbReference type="STRING" id="314225.ELI_08070"/>
<dbReference type="KEGG" id="eli:ELI_08070"/>
<dbReference type="eggNOG" id="COG0099">
    <property type="taxonomic scope" value="Bacteria"/>
</dbReference>
<dbReference type="HOGENOM" id="CLU_103849_1_2_5"/>
<dbReference type="OrthoDB" id="9803610at2"/>
<dbReference type="Proteomes" id="UP000008808">
    <property type="component" value="Chromosome"/>
</dbReference>
<dbReference type="GO" id="GO:0005829">
    <property type="term" value="C:cytosol"/>
    <property type="evidence" value="ECO:0007669"/>
    <property type="project" value="TreeGrafter"/>
</dbReference>
<dbReference type="GO" id="GO:0015935">
    <property type="term" value="C:small ribosomal subunit"/>
    <property type="evidence" value="ECO:0007669"/>
    <property type="project" value="TreeGrafter"/>
</dbReference>
<dbReference type="GO" id="GO:0019843">
    <property type="term" value="F:rRNA binding"/>
    <property type="evidence" value="ECO:0007669"/>
    <property type="project" value="UniProtKB-UniRule"/>
</dbReference>
<dbReference type="GO" id="GO:0003735">
    <property type="term" value="F:structural constituent of ribosome"/>
    <property type="evidence" value="ECO:0007669"/>
    <property type="project" value="InterPro"/>
</dbReference>
<dbReference type="GO" id="GO:0000049">
    <property type="term" value="F:tRNA binding"/>
    <property type="evidence" value="ECO:0007669"/>
    <property type="project" value="UniProtKB-UniRule"/>
</dbReference>
<dbReference type="GO" id="GO:0006412">
    <property type="term" value="P:translation"/>
    <property type="evidence" value="ECO:0007669"/>
    <property type="project" value="UniProtKB-UniRule"/>
</dbReference>
<dbReference type="FunFam" id="1.10.8.50:FF:000001">
    <property type="entry name" value="30S ribosomal protein S13"/>
    <property type="match status" value="1"/>
</dbReference>
<dbReference type="FunFam" id="4.10.910.10:FF:000001">
    <property type="entry name" value="30S ribosomal protein S13"/>
    <property type="match status" value="1"/>
</dbReference>
<dbReference type="Gene3D" id="1.10.8.50">
    <property type="match status" value="1"/>
</dbReference>
<dbReference type="Gene3D" id="4.10.910.10">
    <property type="entry name" value="30s ribosomal protein s13, domain 2"/>
    <property type="match status" value="1"/>
</dbReference>
<dbReference type="HAMAP" id="MF_01315">
    <property type="entry name" value="Ribosomal_uS13"/>
    <property type="match status" value="1"/>
</dbReference>
<dbReference type="InterPro" id="IPR027437">
    <property type="entry name" value="Rbsml_uS13_C"/>
</dbReference>
<dbReference type="InterPro" id="IPR001892">
    <property type="entry name" value="Ribosomal_uS13"/>
</dbReference>
<dbReference type="InterPro" id="IPR010979">
    <property type="entry name" value="Ribosomal_uS13-like_H2TH"/>
</dbReference>
<dbReference type="InterPro" id="IPR019980">
    <property type="entry name" value="Ribosomal_uS13_bac-type"/>
</dbReference>
<dbReference type="InterPro" id="IPR018269">
    <property type="entry name" value="Ribosomal_uS13_CS"/>
</dbReference>
<dbReference type="NCBIfam" id="TIGR03631">
    <property type="entry name" value="uS13_bact"/>
    <property type="match status" value="1"/>
</dbReference>
<dbReference type="PANTHER" id="PTHR10871">
    <property type="entry name" value="30S RIBOSOMAL PROTEIN S13/40S RIBOSOMAL PROTEIN S18"/>
    <property type="match status" value="1"/>
</dbReference>
<dbReference type="PANTHER" id="PTHR10871:SF1">
    <property type="entry name" value="SMALL RIBOSOMAL SUBUNIT PROTEIN US13M"/>
    <property type="match status" value="1"/>
</dbReference>
<dbReference type="Pfam" id="PF00416">
    <property type="entry name" value="Ribosomal_S13"/>
    <property type="match status" value="1"/>
</dbReference>
<dbReference type="PIRSF" id="PIRSF002134">
    <property type="entry name" value="Ribosomal_S13"/>
    <property type="match status" value="1"/>
</dbReference>
<dbReference type="SUPFAM" id="SSF46946">
    <property type="entry name" value="S13-like H2TH domain"/>
    <property type="match status" value="1"/>
</dbReference>
<dbReference type="PROSITE" id="PS00646">
    <property type="entry name" value="RIBOSOMAL_S13_1"/>
    <property type="match status" value="1"/>
</dbReference>
<dbReference type="PROSITE" id="PS50159">
    <property type="entry name" value="RIBOSOMAL_S13_2"/>
    <property type="match status" value="1"/>
</dbReference>
<keyword id="KW-1185">Reference proteome</keyword>
<keyword id="KW-0687">Ribonucleoprotein</keyword>
<keyword id="KW-0689">Ribosomal protein</keyword>
<keyword id="KW-0694">RNA-binding</keyword>
<keyword id="KW-0699">rRNA-binding</keyword>
<keyword id="KW-0820">tRNA-binding</keyword>
<evidence type="ECO:0000255" key="1">
    <source>
        <dbReference type="HAMAP-Rule" id="MF_01315"/>
    </source>
</evidence>
<evidence type="ECO:0000256" key="2">
    <source>
        <dbReference type="SAM" id="MobiDB-lite"/>
    </source>
</evidence>
<evidence type="ECO:0000305" key="3"/>
<accession>Q2N9D5</accession>
<gene>
    <name evidence="1" type="primary">rpsM</name>
    <name type="ordered locus">ELI_08070</name>
</gene>
<feature type="chain" id="PRO_0000306599" description="Small ribosomal subunit protein uS13">
    <location>
        <begin position="1"/>
        <end position="122"/>
    </location>
</feature>
<feature type="region of interest" description="Disordered" evidence="2">
    <location>
        <begin position="92"/>
        <end position="122"/>
    </location>
</feature>
<feature type="compositionally biased region" description="Basic residues" evidence="2">
    <location>
        <begin position="101"/>
        <end position="122"/>
    </location>
</feature>
<proteinExistence type="inferred from homology"/>
<organism>
    <name type="scientific">Erythrobacter litoralis (strain HTCC2594)</name>
    <dbReference type="NCBI Taxonomy" id="314225"/>
    <lineage>
        <taxon>Bacteria</taxon>
        <taxon>Pseudomonadati</taxon>
        <taxon>Pseudomonadota</taxon>
        <taxon>Alphaproteobacteria</taxon>
        <taxon>Sphingomonadales</taxon>
        <taxon>Erythrobacteraceae</taxon>
        <taxon>Erythrobacter/Porphyrobacter group</taxon>
        <taxon>Erythrobacter</taxon>
    </lineage>
</organism>
<protein>
    <recommendedName>
        <fullName evidence="1">Small ribosomal subunit protein uS13</fullName>
    </recommendedName>
    <alternativeName>
        <fullName evidence="3">30S ribosomal protein S13</fullName>
    </alternativeName>
</protein>
<name>RS13_ERYLH</name>
<sequence length="122" mass="13859">MARIAGVNIPTNKRVIIALTYIHGIGRTTAVKIADKLGIDHARRVQDLTDEEVLRLRETIDEDLMVEGDLRRETAMNIKRLMDLKSYRGLRHRNGLPVRGQRTHTNARTRKGKAKPIAGKKK</sequence>